<evidence type="ECO:0000255" key="1">
    <source>
        <dbReference type="HAMAP-Rule" id="MF_00079"/>
    </source>
</evidence>
<sequence length="299" mass="33246">MLDNTRLRIAIQKSGRLSDDSRELLARCGIKINLHTQRLIAMAENMPIDILRVRDDDIPGLVMDGVVDLGIIGENVLEEELLNRRAQGEDPRYFTLRRLDFGGCRLSLATPVDEAWDGPAALDGKRIATSYPHLLKRYLDQKGVSFKSCLLNGSVEVAPRAGLADAICDLVSTGATLEANGLREVEVIYRSKACLIQRDGEMAQSKQELIDKLLTRIQGVIQARESKYIMMHAPSERLEEVIALLPGAERPTILPLAGEQQRVAMHMVSSETLFWETMEKLKALGASSILVLPIEKMME</sequence>
<feature type="chain" id="PRO_1000092751" description="ATP phosphoribosyltransferase">
    <location>
        <begin position="1"/>
        <end position="299"/>
    </location>
</feature>
<reference key="1">
    <citation type="journal article" date="2011" name="J. Bacteriol.">
        <title>Comparative genomics of 28 Salmonella enterica isolates: evidence for CRISPR-mediated adaptive sublineage evolution.</title>
        <authorList>
            <person name="Fricke W.F."/>
            <person name="Mammel M.K."/>
            <person name="McDermott P.F."/>
            <person name="Tartera C."/>
            <person name="White D.G."/>
            <person name="Leclerc J.E."/>
            <person name="Ravel J."/>
            <person name="Cebula T.A."/>
        </authorList>
    </citation>
    <scope>NUCLEOTIDE SEQUENCE [LARGE SCALE GENOMIC DNA]</scope>
    <source>
        <strain>CVM19633</strain>
    </source>
</reference>
<organism>
    <name type="scientific">Salmonella schwarzengrund (strain CVM19633)</name>
    <dbReference type="NCBI Taxonomy" id="439843"/>
    <lineage>
        <taxon>Bacteria</taxon>
        <taxon>Pseudomonadati</taxon>
        <taxon>Pseudomonadota</taxon>
        <taxon>Gammaproteobacteria</taxon>
        <taxon>Enterobacterales</taxon>
        <taxon>Enterobacteriaceae</taxon>
        <taxon>Salmonella</taxon>
    </lineage>
</organism>
<gene>
    <name evidence="1" type="primary">hisG</name>
    <name type="ordered locus">SeSA_A2299</name>
</gene>
<name>HIS1_SALSV</name>
<accession>B4TMR4</accession>
<keyword id="KW-0028">Amino-acid biosynthesis</keyword>
<keyword id="KW-0067">ATP-binding</keyword>
<keyword id="KW-0963">Cytoplasm</keyword>
<keyword id="KW-0328">Glycosyltransferase</keyword>
<keyword id="KW-0368">Histidine biosynthesis</keyword>
<keyword id="KW-0460">Magnesium</keyword>
<keyword id="KW-0479">Metal-binding</keyword>
<keyword id="KW-0547">Nucleotide-binding</keyword>
<keyword id="KW-0808">Transferase</keyword>
<protein>
    <recommendedName>
        <fullName evidence="1">ATP phosphoribosyltransferase</fullName>
        <shortName evidence="1">ATP-PRT</shortName>
        <shortName evidence="1">ATP-PRTase</shortName>
        <ecNumber evidence="1">2.4.2.17</ecNumber>
    </recommendedName>
</protein>
<dbReference type="EC" id="2.4.2.17" evidence="1"/>
<dbReference type="EMBL" id="CP001127">
    <property type="protein sequence ID" value="ACF92583.1"/>
    <property type="molecule type" value="Genomic_DNA"/>
</dbReference>
<dbReference type="RefSeq" id="WP_000886599.1">
    <property type="nucleotide sequence ID" value="NC_011094.1"/>
</dbReference>
<dbReference type="SMR" id="B4TMR4"/>
<dbReference type="KEGG" id="sew:SeSA_A2299"/>
<dbReference type="HOGENOM" id="CLU_038115_1_0_6"/>
<dbReference type="UniPathway" id="UPA00031">
    <property type="reaction ID" value="UER00006"/>
</dbReference>
<dbReference type="Proteomes" id="UP000001865">
    <property type="component" value="Chromosome"/>
</dbReference>
<dbReference type="GO" id="GO:0005737">
    <property type="term" value="C:cytoplasm"/>
    <property type="evidence" value="ECO:0007669"/>
    <property type="project" value="UniProtKB-SubCell"/>
</dbReference>
<dbReference type="GO" id="GO:0005524">
    <property type="term" value="F:ATP binding"/>
    <property type="evidence" value="ECO:0007669"/>
    <property type="project" value="UniProtKB-KW"/>
</dbReference>
<dbReference type="GO" id="GO:0003879">
    <property type="term" value="F:ATP phosphoribosyltransferase activity"/>
    <property type="evidence" value="ECO:0007669"/>
    <property type="project" value="UniProtKB-UniRule"/>
</dbReference>
<dbReference type="GO" id="GO:0000287">
    <property type="term" value="F:magnesium ion binding"/>
    <property type="evidence" value="ECO:0007669"/>
    <property type="project" value="UniProtKB-UniRule"/>
</dbReference>
<dbReference type="GO" id="GO:0000105">
    <property type="term" value="P:L-histidine biosynthetic process"/>
    <property type="evidence" value="ECO:0007669"/>
    <property type="project" value="UniProtKB-UniRule"/>
</dbReference>
<dbReference type="CDD" id="cd13592">
    <property type="entry name" value="PBP2_HisGL2"/>
    <property type="match status" value="1"/>
</dbReference>
<dbReference type="FunFam" id="3.30.70.120:FF:000002">
    <property type="entry name" value="ATP phosphoribosyltransferase"/>
    <property type="match status" value="1"/>
</dbReference>
<dbReference type="FunFam" id="3.40.190.10:FF:000008">
    <property type="entry name" value="ATP phosphoribosyltransferase"/>
    <property type="match status" value="1"/>
</dbReference>
<dbReference type="Gene3D" id="3.30.70.120">
    <property type="match status" value="1"/>
</dbReference>
<dbReference type="Gene3D" id="3.40.190.10">
    <property type="entry name" value="Periplasmic binding protein-like II"/>
    <property type="match status" value="2"/>
</dbReference>
<dbReference type="HAMAP" id="MF_00079">
    <property type="entry name" value="HisG_Long"/>
    <property type="match status" value="1"/>
</dbReference>
<dbReference type="InterPro" id="IPR020621">
    <property type="entry name" value="ATP-PRT_HisG_long"/>
</dbReference>
<dbReference type="InterPro" id="IPR013820">
    <property type="entry name" value="ATP_PRibTrfase_cat"/>
</dbReference>
<dbReference type="InterPro" id="IPR018198">
    <property type="entry name" value="ATP_PRibTrfase_CS"/>
</dbReference>
<dbReference type="InterPro" id="IPR001348">
    <property type="entry name" value="ATP_PRibTrfase_HisG"/>
</dbReference>
<dbReference type="InterPro" id="IPR013115">
    <property type="entry name" value="HisG_C"/>
</dbReference>
<dbReference type="InterPro" id="IPR011322">
    <property type="entry name" value="N-reg_PII-like_a/b"/>
</dbReference>
<dbReference type="InterPro" id="IPR015867">
    <property type="entry name" value="N-reg_PII/ATP_PRibTrfase_C"/>
</dbReference>
<dbReference type="NCBIfam" id="TIGR00070">
    <property type="entry name" value="hisG"/>
    <property type="match status" value="1"/>
</dbReference>
<dbReference type="NCBIfam" id="TIGR03455">
    <property type="entry name" value="HisG_C-term"/>
    <property type="match status" value="1"/>
</dbReference>
<dbReference type="PANTHER" id="PTHR21403:SF8">
    <property type="entry name" value="ATP PHOSPHORIBOSYLTRANSFERASE"/>
    <property type="match status" value="1"/>
</dbReference>
<dbReference type="PANTHER" id="PTHR21403">
    <property type="entry name" value="ATP PHOSPHORIBOSYLTRANSFERASE ATP-PRTASE"/>
    <property type="match status" value="1"/>
</dbReference>
<dbReference type="Pfam" id="PF01634">
    <property type="entry name" value="HisG"/>
    <property type="match status" value="1"/>
</dbReference>
<dbReference type="Pfam" id="PF08029">
    <property type="entry name" value="HisG_C"/>
    <property type="match status" value="1"/>
</dbReference>
<dbReference type="SUPFAM" id="SSF54913">
    <property type="entry name" value="GlnB-like"/>
    <property type="match status" value="1"/>
</dbReference>
<dbReference type="SUPFAM" id="SSF53850">
    <property type="entry name" value="Periplasmic binding protein-like II"/>
    <property type="match status" value="1"/>
</dbReference>
<dbReference type="PROSITE" id="PS01316">
    <property type="entry name" value="ATP_P_PHORIBOSYLTR"/>
    <property type="match status" value="1"/>
</dbReference>
<comment type="function">
    <text evidence="1">Catalyzes the condensation of ATP and 5-phosphoribose 1-diphosphate to form N'-(5'-phosphoribosyl)-ATP (PR-ATP). Has a crucial role in the pathway because the rate of histidine biosynthesis seems to be controlled primarily by regulation of HisG enzymatic activity.</text>
</comment>
<comment type="catalytic activity">
    <reaction evidence="1">
        <text>1-(5-phospho-beta-D-ribosyl)-ATP + diphosphate = 5-phospho-alpha-D-ribose 1-diphosphate + ATP</text>
        <dbReference type="Rhea" id="RHEA:18473"/>
        <dbReference type="ChEBI" id="CHEBI:30616"/>
        <dbReference type="ChEBI" id="CHEBI:33019"/>
        <dbReference type="ChEBI" id="CHEBI:58017"/>
        <dbReference type="ChEBI" id="CHEBI:73183"/>
        <dbReference type="EC" id="2.4.2.17"/>
    </reaction>
</comment>
<comment type="cofactor">
    <cofactor evidence="1">
        <name>Mg(2+)</name>
        <dbReference type="ChEBI" id="CHEBI:18420"/>
    </cofactor>
</comment>
<comment type="activity regulation">
    <text evidence="1">Feedback inhibited by histidine.</text>
</comment>
<comment type="pathway">
    <text evidence="1">Amino-acid biosynthesis; L-histidine biosynthesis; L-histidine from 5-phospho-alpha-D-ribose 1-diphosphate: step 1/9.</text>
</comment>
<comment type="subunit">
    <text evidence="1">Equilibrium between an active dimeric form, an inactive hexameric form and higher aggregates. Interconversion between the various forms is largely reversible and is influenced by the natural substrates and inhibitors of the enzyme.</text>
</comment>
<comment type="subcellular location">
    <subcellularLocation>
        <location evidence="1">Cytoplasm</location>
    </subcellularLocation>
</comment>
<comment type="similarity">
    <text evidence="1">Belongs to the ATP phosphoribosyltransferase family. Long subfamily.</text>
</comment>
<proteinExistence type="inferred from homology"/>